<protein>
    <recommendedName>
        <fullName>GDP-mannose 4,6 dehydratase 2</fullName>
        <ecNumber>4.2.1.47</ecNumber>
    </recommendedName>
    <alternativeName>
        <fullName>GDP-D-mannose dehydratase</fullName>
        <shortName>GMD</shortName>
    </alternativeName>
</protein>
<reference key="1">
    <citation type="journal article" date="1998" name="Science">
        <title>Genome sequence of the nematode C. elegans: a platform for investigating biology.</title>
        <authorList>
            <consortium name="The C. elegans sequencing consortium"/>
        </authorList>
    </citation>
    <scope>NUCLEOTIDE SEQUENCE [LARGE SCALE GENOMIC DNA]</scope>
    <source>
        <strain>Bristol N2</strain>
    </source>
</reference>
<reference key="2">
    <citation type="journal article" date="2006" name="FEBS J.">
        <title>Reconstitution in vitro of the GDP-fucose biosynthetic pathways of Caenorhabditis elegans and Drosophila melanogaster.</title>
        <authorList>
            <person name="Rhomberg S."/>
            <person name="Fuchsluger C."/>
            <person name="Rendic D."/>
            <person name="Paschinger K."/>
            <person name="Jantsch V."/>
            <person name="Kosma P."/>
            <person name="Wilson I.B.H."/>
        </authorList>
    </citation>
    <scope>NUCLEOTIDE SEQUENCE [MRNA] OF 8-382</scope>
    <scope>FUNCTION</scope>
    <scope>CATALYTIC ACTIVITY</scope>
    <scope>BIOPHYSICOCHEMICAL PROPERTIES</scope>
    <scope>PATHWAY</scope>
    <scope>DEVELOPMENTAL STAGE</scope>
</reference>
<organism>
    <name type="scientific">Caenorhabditis elegans</name>
    <dbReference type="NCBI Taxonomy" id="6239"/>
    <lineage>
        <taxon>Eukaryota</taxon>
        <taxon>Metazoa</taxon>
        <taxon>Ecdysozoa</taxon>
        <taxon>Nematoda</taxon>
        <taxon>Chromadorea</taxon>
        <taxon>Rhabditida</taxon>
        <taxon>Rhabditina</taxon>
        <taxon>Rhabditomorpha</taxon>
        <taxon>Rhabditoidea</taxon>
        <taxon>Rhabditidae</taxon>
        <taxon>Peloderinae</taxon>
        <taxon>Caenorhabditis</taxon>
    </lineage>
</organism>
<feature type="chain" id="PRO_0000201709" description="GDP-mannose 4,6 dehydratase 2">
    <location>
        <begin position="1"/>
        <end position="382"/>
    </location>
</feature>
<feature type="active site" evidence="1">
    <location>
        <position position="166"/>
    </location>
</feature>
<feature type="active site" description="Nucleophile" evidence="1">
    <location>
        <position position="168"/>
    </location>
</feature>
<feature type="active site" description="Nucleophile" evidence="1">
    <location>
        <position position="190"/>
    </location>
</feature>
<feature type="binding site" evidence="1">
    <location>
        <begin position="40"/>
        <end position="45"/>
    </location>
    <ligand>
        <name>NADP(+)</name>
        <dbReference type="ChEBI" id="CHEBI:58349"/>
    </ligand>
</feature>
<feature type="binding site" evidence="1">
    <location>
        <begin position="97"/>
        <end position="98"/>
    </location>
    <ligand>
        <name>NADP(+)</name>
        <dbReference type="ChEBI" id="CHEBI:58349"/>
    </ligand>
</feature>
<feature type="binding site" evidence="1">
    <location>
        <begin position="119"/>
        <end position="123"/>
    </location>
    <ligand>
        <name>NADP(+)</name>
        <dbReference type="ChEBI" id="CHEBI:58349"/>
    </ligand>
</feature>
<feature type="binding site" evidence="1">
    <location>
        <position position="134"/>
    </location>
    <ligand>
        <name>NADP(+)</name>
        <dbReference type="ChEBI" id="CHEBI:58349"/>
    </ligand>
</feature>
<feature type="binding site" evidence="1">
    <location>
        <position position="194"/>
    </location>
    <ligand>
        <name>NADP(+)</name>
        <dbReference type="ChEBI" id="CHEBI:58349"/>
    </ligand>
</feature>
<feature type="binding site" evidence="1">
    <location>
        <position position="220"/>
    </location>
    <ligand>
        <name>NADP(+)</name>
        <dbReference type="ChEBI" id="CHEBI:58349"/>
    </ligand>
</feature>
<feature type="binding site" evidence="1">
    <location>
        <position position="225"/>
    </location>
    <ligand>
        <name>NADP(+)</name>
        <dbReference type="ChEBI" id="CHEBI:58349"/>
    </ligand>
</feature>
<proteinExistence type="evidence at protein level"/>
<dbReference type="EC" id="4.2.1.47"/>
<dbReference type="EMBL" id="Z81553">
    <property type="protein sequence ID" value="CAB04494.1"/>
    <property type="molecule type" value="Genomic_DNA"/>
</dbReference>
<dbReference type="EMBL" id="AM231685">
    <property type="protein sequence ID" value="CAJ77754.1"/>
    <property type="molecule type" value="mRNA"/>
</dbReference>
<dbReference type="PIR" id="T22798">
    <property type="entry name" value="T22798"/>
</dbReference>
<dbReference type="RefSeq" id="NP_493106.1">
    <property type="nucleotide sequence ID" value="NM_060705.3"/>
</dbReference>
<dbReference type="SMR" id="O45583"/>
<dbReference type="BioGRID" id="51157">
    <property type="interactions" value="1"/>
</dbReference>
<dbReference type="FunCoup" id="O45583">
    <property type="interactions" value="1083"/>
</dbReference>
<dbReference type="STRING" id="6239.F56H6.5.1"/>
<dbReference type="PaxDb" id="6239-F56H6.5"/>
<dbReference type="PeptideAtlas" id="O45583"/>
<dbReference type="EnsemblMetazoa" id="F56H6.5.1">
    <property type="protein sequence ID" value="F56H6.5.1"/>
    <property type="gene ID" value="WBGene00010166"/>
</dbReference>
<dbReference type="GeneID" id="186416"/>
<dbReference type="KEGG" id="cel:CELE_F56H6.5"/>
<dbReference type="UCSC" id="F56H6.5">
    <property type="organism name" value="c. elegans"/>
</dbReference>
<dbReference type="AGR" id="WB:WBGene00010166"/>
<dbReference type="CTD" id="186416"/>
<dbReference type="WormBase" id="F56H6.5">
    <property type="protein sequence ID" value="CE16133"/>
    <property type="gene ID" value="WBGene00010166"/>
    <property type="gene designation" value="gmd-2"/>
</dbReference>
<dbReference type="eggNOG" id="KOG1372">
    <property type="taxonomic scope" value="Eukaryota"/>
</dbReference>
<dbReference type="GeneTree" id="ENSGT00440000033640"/>
<dbReference type="HOGENOM" id="CLU_007383_14_0_1"/>
<dbReference type="InParanoid" id="O45583"/>
<dbReference type="OMA" id="WSTINYR"/>
<dbReference type="OrthoDB" id="10253554at2759"/>
<dbReference type="PhylomeDB" id="O45583"/>
<dbReference type="UniPathway" id="UPA00128">
    <property type="reaction ID" value="UER00190"/>
</dbReference>
<dbReference type="PRO" id="PR:O45583"/>
<dbReference type="Proteomes" id="UP000001940">
    <property type="component" value="Chromosome I"/>
</dbReference>
<dbReference type="Bgee" id="WBGene00010166">
    <property type="expression patterns" value="Expressed in pharyngeal muscle cell (C elegans) and 1 other cell type or tissue"/>
</dbReference>
<dbReference type="GO" id="GO:0008446">
    <property type="term" value="F:GDP-mannose 4,6-dehydratase activity"/>
    <property type="evidence" value="ECO:0000314"/>
    <property type="project" value="UniProtKB"/>
</dbReference>
<dbReference type="GO" id="GO:0042351">
    <property type="term" value="P:'de novo' GDP-L-fucose biosynthetic process"/>
    <property type="evidence" value="ECO:0000318"/>
    <property type="project" value="GO_Central"/>
</dbReference>
<dbReference type="GO" id="GO:0042350">
    <property type="term" value="P:GDP-L-fucose biosynthetic process"/>
    <property type="evidence" value="ECO:0000314"/>
    <property type="project" value="WormBase"/>
</dbReference>
<dbReference type="GO" id="GO:0019673">
    <property type="term" value="P:GDP-mannose metabolic process"/>
    <property type="evidence" value="ECO:0000314"/>
    <property type="project" value="UniProtKB"/>
</dbReference>
<dbReference type="CDD" id="cd05260">
    <property type="entry name" value="GDP_MD_SDR_e"/>
    <property type="match status" value="1"/>
</dbReference>
<dbReference type="FunFam" id="3.40.50.720:FF:000924">
    <property type="entry name" value="GDP-mannose 4,6 dehydratase"/>
    <property type="match status" value="1"/>
</dbReference>
<dbReference type="Gene3D" id="3.40.50.720">
    <property type="entry name" value="NAD(P)-binding Rossmann-like Domain"/>
    <property type="match status" value="1"/>
</dbReference>
<dbReference type="Gene3D" id="3.90.25.10">
    <property type="entry name" value="UDP-galactose 4-epimerase, domain 1"/>
    <property type="match status" value="1"/>
</dbReference>
<dbReference type="HAMAP" id="MF_00955">
    <property type="entry name" value="GDP_Man_dehydratase"/>
    <property type="match status" value="1"/>
</dbReference>
<dbReference type="InterPro" id="IPR006368">
    <property type="entry name" value="GDP_Man_deHydtase"/>
</dbReference>
<dbReference type="InterPro" id="IPR016040">
    <property type="entry name" value="NAD(P)-bd_dom"/>
</dbReference>
<dbReference type="InterPro" id="IPR036291">
    <property type="entry name" value="NAD(P)-bd_dom_sf"/>
</dbReference>
<dbReference type="NCBIfam" id="TIGR01472">
    <property type="entry name" value="gmd"/>
    <property type="match status" value="1"/>
</dbReference>
<dbReference type="PANTHER" id="PTHR43715:SF1">
    <property type="entry name" value="GDP-MANNOSE 4,6 DEHYDRATASE"/>
    <property type="match status" value="1"/>
</dbReference>
<dbReference type="PANTHER" id="PTHR43715">
    <property type="entry name" value="GDP-MANNOSE 4,6-DEHYDRATASE"/>
    <property type="match status" value="1"/>
</dbReference>
<dbReference type="Pfam" id="PF16363">
    <property type="entry name" value="GDP_Man_Dehyd"/>
    <property type="match status" value="1"/>
</dbReference>
<dbReference type="SUPFAM" id="SSF51735">
    <property type="entry name" value="NAD(P)-binding Rossmann-fold domains"/>
    <property type="match status" value="1"/>
</dbReference>
<evidence type="ECO:0000250" key="1"/>
<evidence type="ECO:0000269" key="2">
    <source>
    </source>
</evidence>
<evidence type="ECO:0000305" key="3"/>
<accession>O45583</accession>
<accession>Q1H8X4</accession>
<comment type="function">
    <text evidence="2">Catalyzes the conversion of GDP-D-mannose to GDP-4-dehydro-6-deoxy-D-mannose.</text>
</comment>
<comment type="catalytic activity">
    <reaction evidence="2">
        <text>GDP-alpha-D-mannose = GDP-4-dehydro-alpha-D-rhamnose + H2O</text>
        <dbReference type="Rhea" id="RHEA:23820"/>
        <dbReference type="ChEBI" id="CHEBI:15377"/>
        <dbReference type="ChEBI" id="CHEBI:57527"/>
        <dbReference type="ChEBI" id="CHEBI:57964"/>
        <dbReference type="EC" id="4.2.1.47"/>
    </reaction>
</comment>
<comment type="cofactor">
    <cofactor evidence="1">
        <name>NADP(+)</name>
        <dbReference type="ChEBI" id="CHEBI:58349"/>
    </cofactor>
</comment>
<comment type="biophysicochemical properties">
    <temperatureDependence>
        <text evidence="2">Optimum temperature is 16-23 degrees Celsius.</text>
    </temperatureDependence>
</comment>
<comment type="pathway">
    <text evidence="2">Nucleotide-sugar biosynthesis; GDP-L-fucose biosynthesis via de novo pathway; GDP-L-fucose from GDP-alpha-D-mannose: step 1/2.</text>
</comment>
<comment type="developmental stage">
    <text evidence="2">Expressed throughout development.</text>
</comment>
<comment type="similarity">
    <text evidence="3">Belongs to the NAD(P)-dependent epimerase/dehydratase family. GDP-mannose 4,6-dehydratase subfamily.</text>
</comment>
<keyword id="KW-0456">Lyase</keyword>
<keyword id="KW-0521">NADP</keyword>
<keyword id="KW-1185">Reference proteome</keyword>
<name>GMD2_CAEEL</name>
<gene>
    <name type="primary">gmd-2</name>
    <name type="ORF">F56H6.5</name>
</gene>
<sequence>MEARNAEGLESCIEKIQEVKLSSFAELKAFRERKVALITGITGQDGSYLAELLLSKGYKVHGIIRRSSSFNTARIEHLYGNPVTHNGSASFSLHYGDMTDSSCLIKLISTIEPTEIYHLAAQSHVKVSFDLPEYTAEVDAVGTLRLLDAIHACRLTEKVRFYQASTSELYGKVQEIPQSELTPFYPRSPYAVAKMYGYWIVVNYREAYKMFACNGILFNHESPRRGETFVTRKITRSVAKISLRQQEHIELGNLSALRDWGHAKEYVEAMWRILQQDTPDDFVIATGKQFSVREFCNLAFAEIGEQLVWEGEGVDEVGKNQDGVVRVKVSPKYYRPTEVETLLGNPAKARKTLGWEPKITVPELVKEMVASDIALMEADPMA</sequence>